<feature type="chain" id="PRO_0000260387" description="Ankyrin repeat, SAM and basic leucine zipper domain-containing protein 1">
    <location>
        <begin position="1"/>
        <end position="477"/>
    </location>
</feature>
<feature type="repeat" description="ANK 1">
    <location>
        <begin position="46"/>
        <end position="76"/>
    </location>
</feature>
<feature type="repeat" description="ANK 2">
    <location>
        <begin position="80"/>
        <end position="109"/>
    </location>
</feature>
<feature type="repeat" description="ANK 3">
    <location>
        <begin position="112"/>
        <end position="146"/>
    </location>
</feature>
<feature type="repeat" description="ANK 4">
    <location>
        <begin position="150"/>
        <end position="179"/>
    </location>
</feature>
<feature type="repeat" description="ANK 5">
    <location>
        <begin position="183"/>
        <end position="212"/>
    </location>
</feature>
<feature type="repeat" description="ANK 6">
    <location>
        <begin position="216"/>
        <end position="245"/>
    </location>
</feature>
<feature type="domain" description="SAM">
    <location>
        <begin position="274"/>
        <end position="336"/>
    </location>
</feature>
<feature type="modified residue" description="Phosphoserine" evidence="2">
    <location>
        <position position="17"/>
    </location>
</feature>
<feature type="modified residue" description="Phosphoserine" evidence="2">
    <location>
        <position position="18"/>
    </location>
</feature>
<feature type="modified residue" description="Phosphoserine" evidence="2">
    <location>
        <position position="20"/>
    </location>
</feature>
<gene>
    <name type="primary">ASZ1</name>
    <name type="synonym">GASZ</name>
</gene>
<keyword id="KW-0040">ANK repeat</keyword>
<keyword id="KW-0963">Cytoplasm</keyword>
<keyword id="KW-0217">Developmental protein</keyword>
<keyword id="KW-0221">Differentiation</keyword>
<keyword id="KW-0469">Meiosis</keyword>
<keyword id="KW-0597">Phosphoprotein</keyword>
<keyword id="KW-0677">Repeat</keyword>
<keyword id="KW-0943">RNA-mediated gene silencing</keyword>
<keyword id="KW-0744">Spermatogenesis</keyword>
<dbReference type="EMBL" id="DP000177">
    <property type="protein sequence ID" value="ABI75274.1"/>
    <property type="molecule type" value="Genomic_DNA"/>
</dbReference>
<dbReference type="SMR" id="Q09YK6"/>
<dbReference type="GO" id="GO:0071546">
    <property type="term" value="C:pi-body"/>
    <property type="evidence" value="ECO:0000250"/>
    <property type="project" value="UniProtKB"/>
</dbReference>
<dbReference type="GO" id="GO:0030154">
    <property type="term" value="P:cell differentiation"/>
    <property type="evidence" value="ECO:0007669"/>
    <property type="project" value="UniProtKB-KW"/>
</dbReference>
<dbReference type="GO" id="GO:0007140">
    <property type="term" value="P:male meiotic nuclear division"/>
    <property type="evidence" value="ECO:0000250"/>
    <property type="project" value="UniProtKB"/>
</dbReference>
<dbReference type="GO" id="GO:0031047">
    <property type="term" value="P:regulatory ncRNA-mediated gene silencing"/>
    <property type="evidence" value="ECO:0007669"/>
    <property type="project" value="UniProtKB-KW"/>
</dbReference>
<dbReference type="GO" id="GO:0007283">
    <property type="term" value="P:spermatogenesis"/>
    <property type="evidence" value="ECO:0000250"/>
    <property type="project" value="UniProtKB"/>
</dbReference>
<dbReference type="GO" id="GO:0010526">
    <property type="term" value="P:transposable element silencing"/>
    <property type="evidence" value="ECO:0000250"/>
    <property type="project" value="UniProtKB"/>
</dbReference>
<dbReference type="CDD" id="cd09521">
    <property type="entry name" value="SAM_ASZ1"/>
    <property type="match status" value="1"/>
</dbReference>
<dbReference type="FunFam" id="1.25.40.20:FF:000192">
    <property type="entry name" value="Ankyrin repeat, SAM and basic leucine zipper domain-containing 1"/>
    <property type="match status" value="1"/>
</dbReference>
<dbReference type="FunFam" id="1.10.150.50:FF:000060">
    <property type="entry name" value="Ankyrin repeat, SAM and basic leucine zipper domain-containing protein 1"/>
    <property type="match status" value="1"/>
</dbReference>
<dbReference type="Gene3D" id="1.25.40.20">
    <property type="entry name" value="Ankyrin repeat-containing domain"/>
    <property type="match status" value="1"/>
</dbReference>
<dbReference type="Gene3D" id="1.10.150.50">
    <property type="entry name" value="Transcription Factor, Ets-1"/>
    <property type="match status" value="1"/>
</dbReference>
<dbReference type="InterPro" id="IPR002110">
    <property type="entry name" value="Ankyrin_rpt"/>
</dbReference>
<dbReference type="InterPro" id="IPR036770">
    <property type="entry name" value="Ankyrin_rpt-contain_sf"/>
</dbReference>
<dbReference type="InterPro" id="IPR042650">
    <property type="entry name" value="Asz1_SAM"/>
</dbReference>
<dbReference type="InterPro" id="IPR001660">
    <property type="entry name" value="SAM"/>
</dbReference>
<dbReference type="InterPro" id="IPR013761">
    <property type="entry name" value="SAM/pointed_sf"/>
</dbReference>
<dbReference type="PANTHER" id="PTHR24157">
    <property type="entry name" value="ANKYRIN REPEAT, SAM AND BASIC LEUCINE ZIPPER DOMAIN-CONTAINING PROTEIN 1"/>
    <property type="match status" value="1"/>
</dbReference>
<dbReference type="PANTHER" id="PTHR24157:SF3">
    <property type="entry name" value="ANKYRIN REPEAT, SAM AND BASIC LEUCINE ZIPPER DOMAIN-CONTAINING PROTEIN 1"/>
    <property type="match status" value="1"/>
</dbReference>
<dbReference type="Pfam" id="PF00023">
    <property type="entry name" value="Ank"/>
    <property type="match status" value="1"/>
</dbReference>
<dbReference type="Pfam" id="PF12796">
    <property type="entry name" value="Ank_2"/>
    <property type="match status" value="1"/>
</dbReference>
<dbReference type="Pfam" id="PF07647">
    <property type="entry name" value="SAM_2"/>
    <property type="match status" value="1"/>
</dbReference>
<dbReference type="PRINTS" id="PR01415">
    <property type="entry name" value="ANKYRIN"/>
</dbReference>
<dbReference type="SMART" id="SM00248">
    <property type="entry name" value="ANK"/>
    <property type="match status" value="5"/>
</dbReference>
<dbReference type="SUPFAM" id="SSF48403">
    <property type="entry name" value="Ankyrin repeat"/>
    <property type="match status" value="1"/>
</dbReference>
<dbReference type="SUPFAM" id="SSF140860">
    <property type="entry name" value="Pseudo ankyrin repeat-like"/>
    <property type="match status" value="1"/>
</dbReference>
<dbReference type="PROSITE" id="PS50297">
    <property type="entry name" value="ANK_REP_REGION"/>
    <property type="match status" value="1"/>
</dbReference>
<dbReference type="PROSITE" id="PS50088">
    <property type="entry name" value="ANK_REPEAT"/>
    <property type="match status" value="3"/>
</dbReference>
<sequence>MAASALRGLAVAGGGESSESEDDGWEIGYVDQTSQKLKGQMLPIEEKKEKFKKALTTGDVSLVQELLDSGIISVDATFRYGWTPLMYAASVANAELVRVLLDRGANASFEKDKQTILITACSAHGSEEQILKCVELLLSRNADPNVACRRLMTPIMYAARDGHTQVVALLVAHGAEVNTQDENGYTALTWAARQGRKSIVLKLLELGANKMLQTKDGKLPSEIAKRNKHHEIFSLLSFTLNPLEGKLQQLTKEETICKILTTDSDRENDHIFSSYAAFGDLEVFLHGLGLEHMTDLLKERDITLRHLLTMREDEFTKNGFTSKDQQKILTALKELEVEEIQFGELSEEAKLEISGDEFLNFLLKLNKQCGHLITAVQNIITELPVNSQKIVLEWASPQNFTSVCEELVNNVEDLSEEVCNLKDLIQKLQNERENDPTHIPLREEVSTWNSRILKRTAITVCGFGFLLFICKITFQRK</sequence>
<organism>
    <name type="scientific">Ateles geoffroyi</name>
    <name type="common">Black-handed spider monkey</name>
    <name type="synonym">Geoffroy's spider monkey</name>
    <dbReference type="NCBI Taxonomy" id="9509"/>
    <lineage>
        <taxon>Eukaryota</taxon>
        <taxon>Metazoa</taxon>
        <taxon>Chordata</taxon>
        <taxon>Craniata</taxon>
        <taxon>Vertebrata</taxon>
        <taxon>Euteleostomi</taxon>
        <taxon>Mammalia</taxon>
        <taxon>Eutheria</taxon>
        <taxon>Euarchontoglires</taxon>
        <taxon>Primates</taxon>
        <taxon>Haplorrhini</taxon>
        <taxon>Platyrrhini</taxon>
        <taxon>Atelidae</taxon>
        <taxon>Atelinae</taxon>
        <taxon>Ateles</taxon>
    </lineage>
</organism>
<protein>
    <recommendedName>
        <fullName>Ankyrin repeat, SAM and basic leucine zipper domain-containing protein 1</fullName>
    </recommendedName>
    <alternativeName>
        <fullName>Germ cell-specific ankyrin, SAM and basic leucine zipper domain-containing protein</fullName>
    </alternativeName>
</protein>
<comment type="function">
    <text evidence="1">Plays a central role during spermatogenesis by repressing transposable elements and preventing their mobilization, which is essential for the germline integrity. Acts via the piRNA metabolic process, which mediates the repression of transposable elements during meiosis by forming complexes composed of piRNAs and Piwi proteins and governs the methylation and subsequent repression of transposons. Its association with pi-bodies suggests a participation in the primary piRNAs metabolic process. Required prior to the pachytene stage to facilitate the production of multiple types of piRNAs, including those associated with repeats involved in the regulation of retrotransposons. May act by mediating protein-protein interactions during germ cell maturation (By similarity).</text>
</comment>
<comment type="subunit">
    <text evidence="1">Interacts with DDX4, PIWIL1, RANBP9 and TDRD1.</text>
</comment>
<comment type="subcellular location">
    <subcellularLocation>
        <location evidence="1">Cytoplasm</location>
    </subcellularLocation>
    <text evidence="1">Component of the meiotic nuage, also named P granule, a germ-cell-specific organelle required to repress transposon activity during meiosis. Specifically localizes to pi-bodies, a subset of the nuage which contains primary piRNAs (By similarity).</text>
</comment>
<name>ASZ1_ATEGE</name>
<evidence type="ECO:0000250" key="1"/>
<evidence type="ECO:0000250" key="2">
    <source>
        <dbReference type="UniProtKB" id="Q8VD46"/>
    </source>
</evidence>
<accession>Q09YK6</accession>
<reference key="1">
    <citation type="submission" date="2006-09" db="EMBL/GenBank/DDBJ databases">
        <title>NISC comparative sequencing initiative.</title>
        <authorList>
            <person name="Antonellis A."/>
            <person name="Ayele K."/>
            <person name="Benjamin B."/>
            <person name="Blakesley R.W."/>
            <person name="Boakye A."/>
            <person name="Bouffard G.G."/>
            <person name="Brinkley C."/>
            <person name="Brooks S."/>
            <person name="Chu G."/>
            <person name="Coleman H."/>
            <person name="Engle J."/>
            <person name="Gestole M."/>
            <person name="Greene A."/>
            <person name="Guan X."/>
            <person name="Gupta J."/>
            <person name="Haghighi P."/>
            <person name="Han J."/>
            <person name="Hansen N."/>
            <person name="Ho S.-L."/>
            <person name="Hu P."/>
            <person name="Hunter G."/>
            <person name="Hurle B."/>
            <person name="Idol J.R."/>
            <person name="Kwong P."/>
            <person name="Laric P."/>
            <person name="Larson S."/>
            <person name="Lee-Lin S.-Q."/>
            <person name="Legaspi R."/>
            <person name="Madden M."/>
            <person name="Maduro Q.L."/>
            <person name="Maduro V.B."/>
            <person name="Margulies E.H."/>
            <person name="Masiello C."/>
            <person name="Maskeri B."/>
            <person name="McDowell J."/>
            <person name="Mojidi H.A."/>
            <person name="Mullikin J.C."/>
            <person name="Oestreicher J.S."/>
            <person name="Park M."/>
            <person name="Portnoy M.E."/>
            <person name="Prasad A."/>
            <person name="Puri O."/>
            <person name="Reddix-Dugue N."/>
            <person name="Schandler K."/>
            <person name="Schueler M.G."/>
            <person name="Sison C."/>
            <person name="Stantripop S."/>
            <person name="Stephen E."/>
            <person name="Taye A."/>
            <person name="Thomas J.W."/>
            <person name="Thomas P.J."/>
            <person name="Tsipouri V."/>
            <person name="Ung L."/>
            <person name="Vogt J.L."/>
            <person name="Wetherby K.D."/>
            <person name="Young A."/>
            <person name="Green E.D."/>
        </authorList>
    </citation>
    <scope>NUCLEOTIDE SEQUENCE [LARGE SCALE GENOMIC DNA]</scope>
</reference>
<proteinExistence type="inferred from homology"/>